<dbReference type="EMBL" id="CP000681">
    <property type="protein sequence ID" value="ABP76462.1"/>
    <property type="molecule type" value="Genomic_DNA"/>
</dbReference>
<dbReference type="SMR" id="A4Y929"/>
<dbReference type="STRING" id="319224.Sputcn32_2743"/>
<dbReference type="KEGG" id="spc:Sputcn32_2743"/>
<dbReference type="eggNOG" id="COG1551">
    <property type="taxonomic scope" value="Bacteria"/>
</dbReference>
<dbReference type="HOGENOM" id="CLU_164837_2_2_6"/>
<dbReference type="GO" id="GO:0005829">
    <property type="term" value="C:cytosol"/>
    <property type="evidence" value="ECO:0007669"/>
    <property type="project" value="TreeGrafter"/>
</dbReference>
<dbReference type="GO" id="GO:0048027">
    <property type="term" value="F:mRNA 5'-UTR binding"/>
    <property type="evidence" value="ECO:0007669"/>
    <property type="project" value="UniProtKB-UniRule"/>
</dbReference>
<dbReference type="GO" id="GO:0006402">
    <property type="term" value="P:mRNA catabolic process"/>
    <property type="evidence" value="ECO:0007669"/>
    <property type="project" value="InterPro"/>
</dbReference>
<dbReference type="GO" id="GO:0045947">
    <property type="term" value="P:negative regulation of translational initiation"/>
    <property type="evidence" value="ECO:0007669"/>
    <property type="project" value="UniProtKB-UniRule"/>
</dbReference>
<dbReference type="GO" id="GO:0045948">
    <property type="term" value="P:positive regulation of translational initiation"/>
    <property type="evidence" value="ECO:0007669"/>
    <property type="project" value="UniProtKB-UniRule"/>
</dbReference>
<dbReference type="GO" id="GO:0006109">
    <property type="term" value="P:regulation of carbohydrate metabolic process"/>
    <property type="evidence" value="ECO:0007669"/>
    <property type="project" value="UniProtKB-UniRule"/>
</dbReference>
<dbReference type="FunFam" id="2.60.40.4380:FF:000001">
    <property type="entry name" value="Translational regulator CsrA"/>
    <property type="match status" value="1"/>
</dbReference>
<dbReference type="Gene3D" id="2.60.40.4380">
    <property type="entry name" value="Translational regulator CsrA"/>
    <property type="match status" value="1"/>
</dbReference>
<dbReference type="HAMAP" id="MF_00167">
    <property type="entry name" value="CsrA"/>
    <property type="match status" value="1"/>
</dbReference>
<dbReference type="InterPro" id="IPR003751">
    <property type="entry name" value="CsrA"/>
</dbReference>
<dbReference type="InterPro" id="IPR036107">
    <property type="entry name" value="CsrA_sf"/>
</dbReference>
<dbReference type="NCBIfam" id="TIGR00202">
    <property type="entry name" value="csrA"/>
    <property type="match status" value="1"/>
</dbReference>
<dbReference type="NCBIfam" id="NF002469">
    <property type="entry name" value="PRK01712.1"/>
    <property type="match status" value="1"/>
</dbReference>
<dbReference type="PANTHER" id="PTHR34984">
    <property type="entry name" value="CARBON STORAGE REGULATOR"/>
    <property type="match status" value="1"/>
</dbReference>
<dbReference type="PANTHER" id="PTHR34984:SF1">
    <property type="entry name" value="CARBON STORAGE REGULATOR"/>
    <property type="match status" value="1"/>
</dbReference>
<dbReference type="Pfam" id="PF02599">
    <property type="entry name" value="CsrA"/>
    <property type="match status" value="1"/>
</dbReference>
<dbReference type="SUPFAM" id="SSF117130">
    <property type="entry name" value="CsrA-like"/>
    <property type="match status" value="1"/>
</dbReference>
<reference key="1">
    <citation type="submission" date="2007-04" db="EMBL/GenBank/DDBJ databases">
        <title>Complete sequence of Shewanella putrefaciens CN-32.</title>
        <authorList>
            <consortium name="US DOE Joint Genome Institute"/>
            <person name="Copeland A."/>
            <person name="Lucas S."/>
            <person name="Lapidus A."/>
            <person name="Barry K."/>
            <person name="Detter J.C."/>
            <person name="Glavina del Rio T."/>
            <person name="Hammon N."/>
            <person name="Israni S."/>
            <person name="Dalin E."/>
            <person name="Tice H."/>
            <person name="Pitluck S."/>
            <person name="Chain P."/>
            <person name="Malfatti S."/>
            <person name="Shin M."/>
            <person name="Vergez L."/>
            <person name="Schmutz J."/>
            <person name="Larimer F."/>
            <person name="Land M."/>
            <person name="Hauser L."/>
            <person name="Kyrpides N."/>
            <person name="Mikhailova N."/>
            <person name="Romine M.F."/>
            <person name="Fredrickson J."/>
            <person name="Tiedje J."/>
            <person name="Richardson P."/>
        </authorList>
    </citation>
    <scope>NUCLEOTIDE SEQUENCE [LARGE SCALE GENOMIC DNA]</scope>
    <source>
        <strain>CN-32 / ATCC BAA-453</strain>
    </source>
</reference>
<protein>
    <recommendedName>
        <fullName evidence="1">Translational regulator CsrA</fullName>
    </recommendedName>
    <alternativeName>
        <fullName evidence="1">Carbon storage regulator</fullName>
    </alternativeName>
</protein>
<sequence length="65" mass="7111">MLILTRRVGETLMIGDEVTVTVLGVKGNQVRIGVNAPKEVSVHREEIYQRIQSEKSGSPSEGGNF</sequence>
<feature type="chain" id="PRO_1000023421" description="Translational regulator CsrA">
    <location>
        <begin position="1"/>
        <end position="65"/>
    </location>
</feature>
<gene>
    <name evidence="1" type="primary">csrA</name>
    <name type="ordered locus">Sputcn32_2743</name>
</gene>
<name>CSRA_SHEPC</name>
<keyword id="KW-0010">Activator</keyword>
<keyword id="KW-0963">Cytoplasm</keyword>
<keyword id="KW-0678">Repressor</keyword>
<keyword id="KW-0694">RNA-binding</keyword>
<keyword id="KW-0810">Translation regulation</keyword>
<evidence type="ECO:0000255" key="1">
    <source>
        <dbReference type="HAMAP-Rule" id="MF_00167"/>
    </source>
</evidence>
<proteinExistence type="inferred from homology"/>
<organism>
    <name type="scientific">Shewanella putrefaciens (strain CN-32 / ATCC BAA-453)</name>
    <dbReference type="NCBI Taxonomy" id="319224"/>
    <lineage>
        <taxon>Bacteria</taxon>
        <taxon>Pseudomonadati</taxon>
        <taxon>Pseudomonadota</taxon>
        <taxon>Gammaproteobacteria</taxon>
        <taxon>Alteromonadales</taxon>
        <taxon>Shewanellaceae</taxon>
        <taxon>Shewanella</taxon>
    </lineage>
</organism>
<comment type="function">
    <text evidence="1">A key translational regulator that binds mRNA to regulate translation initiation and/or mRNA stability. Mediates global changes in gene expression, shifting from rapid growth to stress survival by linking envelope stress, the stringent response and the catabolite repression systems. Usually binds in the 5'-UTR; binding at or near the Shine-Dalgarno sequence prevents ribosome-binding, repressing translation, binding elsewhere in the 5'-UTR can activate translation and/or stabilize the mRNA. Its function is antagonized by small RNA(s).</text>
</comment>
<comment type="subunit">
    <text evidence="1">Homodimer; the beta-strands of each monomer intercalate to form a hydrophobic core, while the alpha-helices form wings that extend away from the core.</text>
</comment>
<comment type="subcellular location">
    <subcellularLocation>
        <location evidence="1">Cytoplasm</location>
    </subcellularLocation>
</comment>
<comment type="similarity">
    <text evidence="1">Belongs to the CsrA/RsmA family.</text>
</comment>
<accession>A4Y929</accession>